<feature type="chain" id="PRO_1000214094" description="UPF0248 protein M164_2614">
    <location>
        <begin position="1"/>
        <end position="80"/>
    </location>
</feature>
<evidence type="ECO:0000255" key="1">
    <source>
        <dbReference type="HAMAP-Rule" id="MF_01245"/>
    </source>
</evidence>
<proteinExistence type="inferred from homology"/>
<protein>
    <recommendedName>
        <fullName evidence="1">UPF0248 protein M164_2614</fullName>
    </recommendedName>
</protein>
<accession>C4KEU3</accession>
<name>Y2614_SACI6</name>
<sequence>MKIKDAVNMIRWKYREKIDDYVVIIIDRLTENGLKEISFSEIDDVDNNYLYLKSEENTVIPLHRVLMIKRKSDNALIWKR</sequence>
<dbReference type="EMBL" id="CP001402">
    <property type="protein sequence ID" value="ACR43206.1"/>
    <property type="molecule type" value="Genomic_DNA"/>
</dbReference>
<dbReference type="RefSeq" id="WP_012712542.1">
    <property type="nucleotide sequence ID" value="NC_012726.1"/>
</dbReference>
<dbReference type="KEGG" id="sid:M164_2614"/>
<dbReference type="HOGENOM" id="CLU_172276_0_0_2"/>
<dbReference type="Proteomes" id="UP000001479">
    <property type="component" value="Chromosome"/>
</dbReference>
<dbReference type="HAMAP" id="MF_01245">
    <property type="entry name" value="UPF0248"/>
    <property type="match status" value="1"/>
</dbReference>
<dbReference type="InterPro" id="IPR040459">
    <property type="entry name" value="MJ1316"/>
</dbReference>
<dbReference type="InterPro" id="IPR007547">
    <property type="entry name" value="UPF0248"/>
</dbReference>
<dbReference type="Pfam" id="PF04457">
    <property type="entry name" value="MJ1316"/>
    <property type="match status" value="1"/>
</dbReference>
<organism>
    <name type="scientific">Saccharolobus islandicus (strain M.16.4 / Kamchatka #3)</name>
    <name type="common">Sulfolobus islandicus</name>
    <dbReference type="NCBI Taxonomy" id="426118"/>
    <lineage>
        <taxon>Archaea</taxon>
        <taxon>Thermoproteota</taxon>
        <taxon>Thermoprotei</taxon>
        <taxon>Sulfolobales</taxon>
        <taxon>Sulfolobaceae</taxon>
        <taxon>Saccharolobus</taxon>
    </lineage>
</organism>
<comment type="similarity">
    <text evidence="1">Belongs to the UPF0248 family.</text>
</comment>
<gene>
    <name type="ordered locus">M164_2614</name>
</gene>
<reference key="1">
    <citation type="journal article" date="2009" name="Proc. Natl. Acad. Sci. U.S.A.">
        <title>Biogeography of the Sulfolobus islandicus pan-genome.</title>
        <authorList>
            <person name="Reno M.L."/>
            <person name="Held N.L."/>
            <person name="Fields C.J."/>
            <person name="Burke P.V."/>
            <person name="Whitaker R.J."/>
        </authorList>
    </citation>
    <scope>NUCLEOTIDE SEQUENCE [LARGE SCALE GENOMIC DNA]</scope>
    <source>
        <strain>M.16.4 / Kamchatka #3</strain>
    </source>
</reference>